<proteinExistence type="evidence at transcript level"/>
<protein>
    <recommendedName>
        <fullName>Enolase</fullName>
        <ecNumber>4.2.1.11</ecNumber>
    </recommendedName>
    <alternativeName>
        <fullName>2-phospho-D-glycerate hydro-lyase</fullName>
    </alternativeName>
    <alternativeName>
        <fullName>2-phosphoglycerate dehydratase</fullName>
    </alternativeName>
</protein>
<organism>
    <name type="scientific">Penicillium chrysogenum</name>
    <name type="common">Penicillium notatum</name>
    <dbReference type="NCBI Taxonomy" id="5076"/>
    <lineage>
        <taxon>Eukaryota</taxon>
        <taxon>Fungi</taxon>
        <taxon>Dikarya</taxon>
        <taxon>Ascomycota</taxon>
        <taxon>Pezizomycotina</taxon>
        <taxon>Eurotiomycetes</taxon>
        <taxon>Eurotiomycetidae</taxon>
        <taxon>Eurotiales</taxon>
        <taxon>Aspergillaceae</taxon>
        <taxon>Penicillium</taxon>
        <taxon>Penicillium chrysogenum species complex</taxon>
    </lineage>
</organism>
<reference key="1">
    <citation type="journal article" date="2004" name="FEMS Microbiol. Lett.">
        <title>Cloning and characterization of preferentially expressed genes in an aluminum-tolerant mutant derived from Penicillium chrysogenum IFO4626.</title>
        <authorList>
            <person name="Sugimoto M."/>
            <person name="Saiki Y."/>
            <person name="Zhang D."/>
            <person name="Kawai F."/>
        </authorList>
    </citation>
    <scope>NUCLEOTIDE SEQUENCE [MRNA]</scope>
    <source>
        <strain>ATCC 10002 / CBS 277.47 / NBRC 4626 / Wis. Q-176</strain>
    </source>
</reference>
<accession>Q76KF9</accession>
<comment type="catalytic activity">
    <reaction>
        <text>(2R)-2-phosphoglycerate = phosphoenolpyruvate + H2O</text>
        <dbReference type="Rhea" id="RHEA:10164"/>
        <dbReference type="ChEBI" id="CHEBI:15377"/>
        <dbReference type="ChEBI" id="CHEBI:58289"/>
        <dbReference type="ChEBI" id="CHEBI:58702"/>
        <dbReference type="EC" id="4.2.1.11"/>
    </reaction>
</comment>
<comment type="cofactor">
    <cofactor evidence="1">
        <name>Mg(2+)</name>
        <dbReference type="ChEBI" id="CHEBI:18420"/>
    </cofactor>
    <text evidence="1">Mg(2+) is required for catalysis and for stabilizing the dimer.</text>
</comment>
<comment type="pathway">
    <text>Carbohydrate degradation; glycolysis; pyruvate from D-glyceraldehyde 3-phosphate: step 4/5.</text>
</comment>
<comment type="subunit">
    <text evidence="1">Homodimer.</text>
</comment>
<comment type="subcellular location">
    <subcellularLocation>
        <location evidence="1">Cytoplasm</location>
    </subcellularLocation>
</comment>
<comment type="similarity">
    <text evidence="2">Belongs to the enolase family.</text>
</comment>
<evidence type="ECO:0000250" key="1"/>
<evidence type="ECO:0000305" key="2"/>
<feature type="chain" id="PRO_0000134055" description="Enolase">
    <location>
        <begin position="1"/>
        <end position="438"/>
    </location>
</feature>
<feature type="active site" description="Proton donor" evidence="1">
    <location>
        <position position="211"/>
    </location>
</feature>
<feature type="active site" description="Proton acceptor" evidence="1">
    <location>
        <position position="347"/>
    </location>
</feature>
<feature type="binding site" evidence="1">
    <location>
        <position position="159"/>
    </location>
    <ligand>
        <name>substrate</name>
    </ligand>
</feature>
<feature type="binding site" evidence="1">
    <location>
        <position position="168"/>
    </location>
    <ligand>
        <name>substrate</name>
    </ligand>
</feature>
<feature type="binding site" evidence="1">
    <location>
        <position position="246"/>
    </location>
    <ligand>
        <name>Mg(2+)</name>
        <dbReference type="ChEBI" id="CHEBI:18420"/>
    </ligand>
</feature>
<feature type="binding site" evidence="1">
    <location>
        <position position="297"/>
    </location>
    <ligand>
        <name>Mg(2+)</name>
        <dbReference type="ChEBI" id="CHEBI:18420"/>
    </ligand>
</feature>
<feature type="binding site" evidence="1">
    <location>
        <position position="297"/>
    </location>
    <ligand>
        <name>substrate</name>
    </ligand>
</feature>
<feature type="binding site" evidence="1">
    <location>
        <position position="322"/>
    </location>
    <ligand>
        <name>Mg(2+)</name>
        <dbReference type="ChEBI" id="CHEBI:18420"/>
    </ligand>
</feature>
<feature type="binding site" evidence="1">
    <location>
        <position position="322"/>
    </location>
    <ligand>
        <name>substrate</name>
    </ligand>
</feature>
<feature type="binding site" evidence="1">
    <location>
        <begin position="374"/>
        <end position="377"/>
    </location>
    <ligand>
        <name>substrate</name>
    </ligand>
</feature>
<feature type="binding site" evidence="1">
    <location>
        <position position="398"/>
    </location>
    <ligand>
        <name>substrate</name>
    </ligand>
</feature>
<sequence>MPISKIHARSVYDSRGNPTVEVDVVTETGLHRAIVPSGASTGLHEVVELRDGDKTKWGGKGVLNAVKNVNDVIGPALIKENIDVKDQAKVDEFLNKLDGTPNKGKLGANAILGVSLAVAKAAAAEKGVPLYAHISDLAGTKKPFVLPVPFQNVLNGGSHAGGRLAFQEFMIVPDTAPTFSEGLRQGAEVYQELKALAKKKYGQSAGNVGDEGGVAPDIQTAEEALDLITEAIEQAGYTGQIKIAMDVASSEFYKEDAKKYDLDFKNPESDPTKWLTYEQLADLYKSLAAKYPIVSIEDPFAEDDWEAWSYFYKTSDFQIVGDDLTVTNPLRIKKAIELKSCNALLLKVNQIGTLTESIQAAKDSYADGWGVMVSHRSGETEDVTIADIAVGLRAGQIKTGAPARSERLAKLNQILRIEEELGANAVYAGEKFRTAVNL</sequence>
<keyword id="KW-0963">Cytoplasm</keyword>
<keyword id="KW-0324">Glycolysis</keyword>
<keyword id="KW-0456">Lyase</keyword>
<keyword id="KW-0460">Magnesium</keyword>
<keyword id="KW-0479">Metal-binding</keyword>
<name>ENO_PENCH</name>
<gene>
    <name type="primary">enoA</name>
</gene>
<dbReference type="EC" id="4.2.1.11"/>
<dbReference type="EMBL" id="AB091508">
    <property type="protein sequence ID" value="BAC82549.1"/>
    <property type="molecule type" value="mRNA"/>
</dbReference>
<dbReference type="SMR" id="Q76KF9"/>
<dbReference type="UniPathway" id="UPA00109">
    <property type="reaction ID" value="UER00187"/>
</dbReference>
<dbReference type="GO" id="GO:0000015">
    <property type="term" value="C:phosphopyruvate hydratase complex"/>
    <property type="evidence" value="ECO:0007669"/>
    <property type="project" value="InterPro"/>
</dbReference>
<dbReference type="GO" id="GO:0000287">
    <property type="term" value="F:magnesium ion binding"/>
    <property type="evidence" value="ECO:0007669"/>
    <property type="project" value="InterPro"/>
</dbReference>
<dbReference type="GO" id="GO:0004634">
    <property type="term" value="F:phosphopyruvate hydratase activity"/>
    <property type="evidence" value="ECO:0007669"/>
    <property type="project" value="UniProtKB-EC"/>
</dbReference>
<dbReference type="GO" id="GO:0006096">
    <property type="term" value="P:glycolytic process"/>
    <property type="evidence" value="ECO:0007669"/>
    <property type="project" value="UniProtKB-UniPathway"/>
</dbReference>
<dbReference type="CDD" id="cd03313">
    <property type="entry name" value="enolase"/>
    <property type="match status" value="1"/>
</dbReference>
<dbReference type="FunFam" id="3.30.390.10:FF:000001">
    <property type="entry name" value="Enolase"/>
    <property type="match status" value="1"/>
</dbReference>
<dbReference type="FunFam" id="3.20.20.120:FF:000002">
    <property type="entry name" value="Enolase 1"/>
    <property type="match status" value="1"/>
</dbReference>
<dbReference type="Gene3D" id="3.20.20.120">
    <property type="entry name" value="Enolase-like C-terminal domain"/>
    <property type="match status" value="1"/>
</dbReference>
<dbReference type="Gene3D" id="3.30.390.10">
    <property type="entry name" value="Enolase-like, N-terminal domain"/>
    <property type="match status" value="1"/>
</dbReference>
<dbReference type="HAMAP" id="MF_00318">
    <property type="entry name" value="Enolase"/>
    <property type="match status" value="1"/>
</dbReference>
<dbReference type="InterPro" id="IPR000941">
    <property type="entry name" value="Enolase"/>
</dbReference>
<dbReference type="InterPro" id="IPR036849">
    <property type="entry name" value="Enolase-like_C_sf"/>
</dbReference>
<dbReference type="InterPro" id="IPR029017">
    <property type="entry name" value="Enolase-like_N"/>
</dbReference>
<dbReference type="InterPro" id="IPR020810">
    <property type="entry name" value="Enolase_C"/>
</dbReference>
<dbReference type="InterPro" id="IPR020809">
    <property type="entry name" value="Enolase_CS"/>
</dbReference>
<dbReference type="InterPro" id="IPR020811">
    <property type="entry name" value="Enolase_N"/>
</dbReference>
<dbReference type="NCBIfam" id="TIGR01060">
    <property type="entry name" value="eno"/>
    <property type="match status" value="1"/>
</dbReference>
<dbReference type="PANTHER" id="PTHR11902">
    <property type="entry name" value="ENOLASE"/>
    <property type="match status" value="1"/>
</dbReference>
<dbReference type="PANTHER" id="PTHR11902:SF1">
    <property type="entry name" value="ENOLASE"/>
    <property type="match status" value="1"/>
</dbReference>
<dbReference type="Pfam" id="PF00113">
    <property type="entry name" value="Enolase_C"/>
    <property type="match status" value="1"/>
</dbReference>
<dbReference type="Pfam" id="PF03952">
    <property type="entry name" value="Enolase_N"/>
    <property type="match status" value="1"/>
</dbReference>
<dbReference type="PIRSF" id="PIRSF001400">
    <property type="entry name" value="Enolase"/>
    <property type="match status" value="1"/>
</dbReference>
<dbReference type="PRINTS" id="PR00148">
    <property type="entry name" value="ENOLASE"/>
</dbReference>
<dbReference type="SFLD" id="SFLDS00001">
    <property type="entry name" value="Enolase"/>
    <property type="match status" value="1"/>
</dbReference>
<dbReference type="SFLD" id="SFLDF00002">
    <property type="entry name" value="enolase"/>
    <property type="match status" value="1"/>
</dbReference>
<dbReference type="SMART" id="SM01192">
    <property type="entry name" value="Enolase_C"/>
    <property type="match status" value="1"/>
</dbReference>
<dbReference type="SMART" id="SM01193">
    <property type="entry name" value="Enolase_N"/>
    <property type="match status" value="1"/>
</dbReference>
<dbReference type="SUPFAM" id="SSF51604">
    <property type="entry name" value="Enolase C-terminal domain-like"/>
    <property type="match status" value="1"/>
</dbReference>
<dbReference type="SUPFAM" id="SSF54826">
    <property type="entry name" value="Enolase N-terminal domain-like"/>
    <property type="match status" value="1"/>
</dbReference>
<dbReference type="PROSITE" id="PS00164">
    <property type="entry name" value="ENOLASE"/>
    <property type="match status" value="1"/>
</dbReference>